<reference key="1">
    <citation type="journal article" date="2009" name="PLoS Genet.">
        <title>Adaptations to submarine hydrothermal environments exemplified by the genome of Nautilia profundicola.</title>
        <authorList>
            <person name="Campbell B.J."/>
            <person name="Smith J.L."/>
            <person name="Hanson T.E."/>
            <person name="Klotz M.G."/>
            <person name="Stein L.Y."/>
            <person name="Lee C.K."/>
            <person name="Wu D."/>
            <person name="Robinson J.M."/>
            <person name="Khouri H.M."/>
            <person name="Eisen J.A."/>
            <person name="Cary S.C."/>
        </authorList>
    </citation>
    <scope>NUCLEOTIDE SEQUENCE [LARGE SCALE GENOMIC DNA]</scope>
    <source>
        <strain>ATCC BAA-1463 / DSM 18972 / AmH</strain>
    </source>
</reference>
<name>DER_NAUPA</name>
<accession>B9L7G9</accession>
<organism>
    <name type="scientific">Nautilia profundicola (strain ATCC BAA-1463 / DSM 18972 / AmH)</name>
    <dbReference type="NCBI Taxonomy" id="598659"/>
    <lineage>
        <taxon>Bacteria</taxon>
        <taxon>Pseudomonadati</taxon>
        <taxon>Campylobacterota</taxon>
        <taxon>Epsilonproteobacteria</taxon>
        <taxon>Nautiliales</taxon>
        <taxon>Nautiliaceae</taxon>
        <taxon>Nautilia</taxon>
    </lineage>
</organism>
<comment type="function">
    <text evidence="1">GTPase that plays an essential role in the late steps of ribosome biogenesis.</text>
</comment>
<comment type="subunit">
    <text evidence="1">Associates with the 50S ribosomal subunit.</text>
</comment>
<comment type="similarity">
    <text evidence="1">Belongs to the TRAFAC class TrmE-Era-EngA-EngB-Septin-like GTPase superfamily. EngA (Der) GTPase family.</text>
</comment>
<protein>
    <recommendedName>
        <fullName evidence="1">GTPase Der</fullName>
    </recommendedName>
    <alternativeName>
        <fullName evidence="1">GTP-binding protein EngA</fullName>
    </alternativeName>
</protein>
<dbReference type="EMBL" id="CP001279">
    <property type="protein sequence ID" value="ACM92844.1"/>
    <property type="molecule type" value="Genomic_DNA"/>
</dbReference>
<dbReference type="RefSeq" id="WP_015901896.1">
    <property type="nucleotide sequence ID" value="NC_012115.1"/>
</dbReference>
<dbReference type="SMR" id="B9L7G9"/>
<dbReference type="STRING" id="598659.NAMH_0140"/>
<dbReference type="KEGG" id="nam:NAMH_0140"/>
<dbReference type="eggNOG" id="COG1160">
    <property type="taxonomic scope" value="Bacteria"/>
</dbReference>
<dbReference type="HOGENOM" id="CLU_016077_6_2_7"/>
<dbReference type="OrthoDB" id="9805918at2"/>
<dbReference type="Proteomes" id="UP000000448">
    <property type="component" value="Chromosome"/>
</dbReference>
<dbReference type="GO" id="GO:0005525">
    <property type="term" value="F:GTP binding"/>
    <property type="evidence" value="ECO:0007669"/>
    <property type="project" value="UniProtKB-UniRule"/>
</dbReference>
<dbReference type="GO" id="GO:0043022">
    <property type="term" value="F:ribosome binding"/>
    <property type="evidence" value="ECO:0007669"/>
    <property type="project" value="TreeGrafter"/>
</dbReference>
<dbReference type="GO" id="GO:0042254">
    <property type="term" value="P:ribosome biogenesis"/>
    <property type="evidence" value="ECO:0007669"/>
    <property type="project" value="UniProtKB-KW"/>
</dbReference>
<dbReference type="CDD" id="cd01894">
    <property type="entry name" value="EngA1"/>
    <property type="match status" value="1"/>
</dbReference>
<dbReference type="CDD" id="cd01895">
    <property type="entry name" value="EngA2"/>
    <property type="match status" value="1"/>
</dbReference>
<dbReference type="FunFam" id="3.30.300.20:FF:000004">
    <property type="entry name" value="GTPase Der"/>
    <property type="match status" value="1"/>
</dbReference>
<dbReference type="FunFam" id="3.40.50.300:FF:000494">
    <property type="entry name" value="tRNA modification GTPase MnmE"/>
    <property type="match status" value="1"/>
</dbReference>
<dbReference type="Gene3D" id="3.30.300.20">
    <property type="match status" value="1"/>
</dbReference>
<dbReference type="Gene3D" id="3.40.50.300">
    <property type="entry name" value="P-loop containing nucleotide triphosphate hydrolases"/>
    <property type="match status" value="2"/>
</dbReference>
<dbReference type="HAMAP" id="MF_00195">
    <property type="entry name" value="GTPase_Der"/>
    <property type="match status" value="1"/>
</dbReference>
<dbReference type="InterPro" id="IPR031166">
    <property type="entry name" value="G_ENGA"/>
</dbReference>
<dbReference type="InterPro" id="IPR006073">
    <property type="entry name" value="GTP-bd"/>
</dbReference>
<dbReference type="InterPro" id="IPR016484">
    <property type="entry name" value="GTPase_Der"/>
</dbReference>
<dbReference type="InterPro" id="IPR032859">
    <property type="entry name" value="KH_dom-like"/>
</dbReference>
<dbReference type="InterPro" id="IPR015946">
    <property type="entry name" value="KH_dom-like_a/b"/>
</dbReference>
<dbReference type="InterPro" id="IPR027417">
    <property type="entry name" value="P-loop_NTPase"/>
</dbReference>
<dbReference type="InterPro" id="IPR005225">
    <property type="entry name" value="Small_GTP-bd"/>
</dbReference>
<dbReference type="NCBIfam" id="TIGR03594">
    <property type="entry name" value="GTPase_EngA"/>
    <property type="match status" value="1"/>
</dbReference>
<dbReference type="NCBIfam" id="TIGR00231">
    <property type="entry name" value="small_GTP"/>
    <property type="match status" value="2"/>
</dbReference>
<dbReference type="PANTHER" id="PTHR43834">
    <property type="entry name" value="GTPASE DER"/>
    <property type="match status" value="1"/>
</dbReference>
<dbReference type="PANTHER" id="PTHR43834:SF6">
    <property type="entry name" value="GTPASE DER"/>
    <property type="match status" value="1"/>
</dbReference>
<dbReference type="Pfam" id="PF14714">
    <property type="entry name" value="KH_dom-like"/>
    <property type="match status" value="1"/>
</dbReference>
<dbReference type="Pfam" id="PF01926">
    <property type="entry name" value="MMR_HSR1"/>
    <property type="match status" value="2"/>
</dbReference>
<dbReference type="PIRSF" id="PIRSF006485">
    <property type="entry name" value="GTP-binding_EngA"/>
    <property type="match status" value="1"/>
</dbReference>
<dbReference type="PRINTS" id="PR00449">
    <property type="entry name" value="RASTRNSFRMNG"/>
</dbReference>
<dbReference type="SMART" id="SM00173">
    <property type="entry name" value="RAS"/>
    <property type="match status" value="1"/>
</dbReference>
<dbReference type="SUPFAM" id="SSF52540">
    <property type="entry name" value="P-loop containing nucleoside triphosphate hydrolases"/>
    <property type="match status" value="2"/>
</dbReference>
<dbReference type="PROSITE" id="PS51712">
    <property type="entry name" value="G_ENGA"/>
    <property type="match status" value="2"/>
</dbReference>
<sequence length="461" mass="53210">MIKVAILGKPNVGKSSLFNRILRERDAIVSEKAGTTRDIKKREVSLDDDLEEIVLLDTGGLEERDELFNKVKEKALEVAKEADLVLYMVDGKTIPDEEEIKYFRNLQKLGKHIILVVNKIDNDKMMEKVYDFYELGADEIFPISVSHNRGVGKLIERIKKFVPKKPKTFEVSEFEQEIPLEDLLVAEENEENLEELKEIKVAIVGRVNVGKSSLLNALVGEERAIVSDVDGTTIDPIDENIYHDGWNITFVDTAGIRRRSKIKDIEKYALLRTEKVLEEADIAILVIDAKEGIVELDEKIGGLIDKHKNGVIIVANKWDENAEEFHKFRKEVYYRFKYLYFAPFLAVSAKTGRNIDKLKDEIIRVYKNYSKRIPTATLNKWIEEATIRHHLPTDIGGKEVKIFYATQYKTKPPTIALIMNRNKLHFSYRRYLVNFLRKKEDFEGTPIIFVARKKGEKHEEA</sequence>
<proteinExistence type="inferred from homology"/>
<keyword id="KW-0342">GTP-binding</keyword>
<keyword id="KW-0547">Nucleotide-binding</keyword>
<keyword id="KW-0677">Repeat</keyword>
<keyword id="KW-0690">Ribosome biogenesis</keyword>
<feature type="chain" id="PRO_1000124365" description="GTPase Der">
    <location>
        <begin position="1"/>
        <end position="461"/>
    </location>
</feature>
<feature type="domain" description="EngA-type G 1">
    <location>
        <begin position="2"/>
        <end position="166"/>
    </location>
</feature>
<feature type="domain" description="EngA-type G 2">
    <location>
        <begin position="199"/>
        <end position="370"/>
    </location>
</feature>
<feature type="domain" description="KH-like" evidence="1">
    <location>
        <begin position="371"/>
        <end position="455"/>
    </location>
</feature>
<feature type="binding site" evidence="1">
    <location>
        <begin position="8"/>
        <end position="15"/>
    </location>
    <ligand>
        <name>GTP</name>
        <dbReference type="ChEBI" id="CHEBI:37565"/>
        <label>1</label>
    </ligand>
</feature>
<feature type="binding site" evidence="1">
    <location>
        <begin position="57"/>
        <end position="61"/>
    </location>
    <ligand>
        <name>GTP</name>
        <dbReference type="ChEBI" id="CHEBI:37565"/>
        <label>1</label>
    </ligand>
</feature>
<feature type="binding site" evidence="1">
    <location>
        <begin position="118"/>
        <end position="121"/>
    </location>
    <ligand>
        <name>GTP</name>
        <dbReference type="ChEBI" id="CHEBI:37565"/>
        <label>1</label>
    </ligand>
</feature>
<feature type="binding site" evidence="1">
    <location>
        <begin position="205"/>
        <end position="212"/>
    </location>
    <ligand>
        <name>GTP</name>
        <dbReference type="ChEBI" id="CHEBI:37565"/>
        <label>2</label>
    </ligand>
</feature>
<feature type="binding site" evidence="1">
    <location>
        <begin position="252"/>
        <end position="256"/>
    </location>
    <ligand>
        <name>GTP</name>
        <dbReference type="ChEBI" id="CHEBI:37565"/>
        <label>2</label>
    </ligand>
</feature>
<feature type="binding site" evidence="1">
    <location>
        <begin position="316"/>
        <end position="319"/>
    </location>
    <ligand>
        <name>GTP</name>
        <dbReference type="ChEBI" id="CHEBI:37565"/>
        <label>2</label>
    </ligand>
</feature>
<gene>
    <name evidence="1" type="primary">der</name>
    <name type="synonym">engA</name>
    <name type="ordered locus">NAMH_0140</name>
</gene>
<evidence type="ECO:0000255" key="1">
    <source>
        <dbReference type="HAMAP-Rule" id="MF_00195"/>
    </source>
</evidence>